<organism>
    <name type="scientific">Chlamydia caviae (strain ATCC VR-813 / DSM 19441 / 03DC25 / GPIC)</name>
    <name type="common">Chlamydophila caviae</name>
    <dbReference type="NCBI Taxonomy" id="227941"/>
    <lineage>
        <taxon>Bacteria</taxon>
        <taxon>Pseudomonadati</taxon>
        <taxon>Chlamydiota</taxon>
        <taxon>Chlamydiia</taxon>
        <taxon>Chlamydiales</taxon>
        <taxon>Chlamydiaceae</taxon>
        <taxon>Chlamydia/Chlamydophila group</taxon>
        <taxon>Chlamydia</taxon>
    </lineage>
</organism>
<accession>Q822J2</accession>
<evidence type="ECO:0000255" key="1">
    <source>
        <dbReference type="HAMAP-Rule" id="MF_01322"/>
    </source>
</evidence>
<dbReference type="EC" id="2.7.7.6" evidence="1"/>
<dbReference type="EMBL" id="AE015925">
    <property type="protein sequence ID" value="AAP05432.1"/>
    <property type="molecule type" value="Genomic_DNA"/>
</dbReference>
<dbReference type="RefSeq" id="WP_011006647.1">
    <property type="nucleotide sequence ID" value="NC_003361.3"/>
</dbReference>
<dbReference type="SMR" id="Q822J2"/>
<dbReference type="STRING" id="227941.CCA_00690"/>
<dbReference type="KEGG" id="cca:CCA_00690"/>
<dbReference type="eggNOG" id="COG0086">
    <property type="taxonomic scope" value="Bacteria"/>
</dbReference>
<dbReference type="HOGENOM" id="CLU_000524_3_1_0"/>
<dbReference type="OrthoDB" id="9815296at2"/>
<dbReference type="Proteomes" id="UP000002193">
    <property type="component" value="Chromosome"/>
</dbReference>
<dbReference type="GO" id="GO:0000428">
    <property type="term" value="C:DNA-directed RNA polymerase complex"/>
    <property type="evidence" value="ECO:0007669"/>
    <property type="project" value="UniProtKB-KW"/>
</dbReference>
<dbReference type="GO" id="GO:0003677">
    <property type="term" value="F:DNA binding"/>
    <property type="evidence" value="ECO:0007669"/>
    <property type="project" value="UniProtKB-UniRule"/>
</dbReference>
<dbReference type="GO" id="GO:0003899">
    <property type="term" value="F:DNA-directed RNA polymerase activity"/>
    <property type="evidence" value="ECO:0007669"/>
    <property type="project" value="UniProtKB-UniRule"/>
</dbReference>
<dbReference type="GO" id="GO:0000287">
    <property type="term" value="F:magnesium ion binding"/>
    <property type="evidence" value="ECO:0007669"/>
    <property type="project" value="UniProtKB-UniRule"/>
</dbReference>
<dbReference type="GO" id="GO:0008270">
    <property type="term" value="F:zinc ion binding"/>
    <property type="evidence" value="ECO:0007669"/>
    <property type="project" value="UniProtKB-UniRule"/>
</dbReference>
<dbReference type="GO" id="GO:0006351">
    <property type="term" value="P:DNA-templated transcription"/>
    <property type="evidence" value="ECO:0007669"/>
    <property type="project" value="UniProtKB-UniRule"/>
</dbReference>
<dbReference type="CDD" id="cd02655">
    <property type="entry name" value="RNAP_beta'_C"/>
    <property type="match status" value="1"/>
</dbReference>
<dbReference type="CDD" id="cd01609">
    <property type="entry name" value="RNAP_beta'_N"/>
    <property type="match status" value="1"/>
</dbReference>
<dbReference type="Gene3D" id="1.10.132.30">
    <property type="match status" value="1"/>
</dbReference>
<dbReference type="Gene3D" id="1.10.150.390">
    <property type="match status" value="1"/>
</dbReference>
<dbReference type="Gene3D" id="1.10.1790.20">
    <property type="match status" value="1"/>
</dbReference>
<dbReference type="Gene3D" id="1.10.40.90">
    <property type="match status" value="1"/>
</dbReference>
<dbReference type="Gene3D" id="2.40.40.20">
    <property type="match status" value="1"/>
</dbReference>
<dbReference type="Gene3D" id="2.40.50.100">
    <property type="match status" value="3"/>
</dbReference>
<dbReference type="Gene3D" id="4.10.860.120">
    <property type="entry name" value="RNA polymerase II, clamp domain"/>
    <property type="match status" value="1"/>
</dbReference>
<dbReference type="Gene3D" id="1.10.274.100">
    <property type="entry name" value="RNA polymerase Rpb1, domain 3"/>
    <property type="match status" value="1"/>
</dbReference>
<dbReference type="HAMAP" id="MF_01322">
    <property type="entry name" value="RNApol_bact_RpoC"/>
    <property type="match status" value="1"/>
</dbReference>
<dbReference type="InterPro" id="IPR045867">
    <property type="entry name" value="DNA-dir_RpoC_beta_prime"/>
</dbReference>
<dbReference type="InterPro" id="IPR012754">
    <property type="entry name" value="DNA-dir_RpoC_beta_prime_bact"/>
</dbReference>
<dbReference type="InterPro" id="IPR000722">
    <property type="entry name" value="RNA_pol_asu"/>
</dbReference>
<dbReference type="InterPro" id="IPR006592">
    <property type="entry name" value="RNA_pol_N"/>
</dbReference>
<dbReference type="InterPro" id="IPR007080">
    <property type="entry name" value="RNA_pol_Rpb1_1"/>
</dbReference>
<dbReference type="InterPro" id="IPR007066">
    <property type="entry name" value="RNA_pol_Rpb1_3"/>
</dbReference>
<dbReference type="InterPro" id="IPR042102">
    <property type="entry name" value="RNA_pol_Rpb1_3_sf"/>
</dbReference>
<dbReference type="InterPro" id="IPR007083">
    <property type="entry name" value="RNA_pol_Rpb1_4"/>
</dbReference>
<dbReference type="InterPro" id="IPR007081">
    <property type="entry name" value="RNA_pol_Rpb1_5"/>
</dbReference>
<dbReference type="InterPro" id="IPR044893">
    <property type="entry name" value="RNA_pol_Rpb1_clamp_domain"/>
</dbReference>
<dbReference type="InterPro" id="IPR038120">
    <property type="entry name" value="Rpb1_funnel_sf"/>
</dbReference>
<dbReference type="NCBIfam" id="TIGR02386">
    <property type="entry name" value="rpoC_TIGR"/>
    <property type="match status" value="1"/>
</dbReference>
<dbReference type="PANTHER" id="PTHR19376">
    <property type="entry name" value="DNA-DIRECTED RNA POLYMERASE"/>
    <property type="match status" value="1"/>
</dbReference>
<dbReference type="PANTHER" id="PTHR19376:SF54">
    <property type="entry name" value="DNA-DIRECTED RNA POLYMERASE SUBUNIT BETA"/>
    <property type="match status" value="1"/>
</dbReference>
<dbReference type="Pfam" id="PF04997">
    <property type="entry name" value="RNA_pol_Rpb1_1"/>
    <property type="match status" value="1"/>
</dbReference>
<dbReference type="Pfam" id="PF00623">
    <property type="entry name" value="RNA_pol_Rpb1_2"/>
    <property type="match status" value="1"/>
</dbReference>
<dbReference type="Pfam" id="PF04983">
    <property type="entry name" value="RNA_pol_Rpb1_3"/>
    <property type="match status" value="1"/>
</dbReference>
<dbReference type="Pfam" id="PF05000">
    <property type="entry name" value="RNA_pol_Rpb1_4"/>
    <property type="match status" value="1"/>
</dbReference>
<dbReference type="Pfam" id="PF04998">
    <property type="entry name" value="RNA_pol_Rpb1_5"/>
    <property type="match status" value="1"/>
</dbReference>
<dbReference type="SMART" id="SM00663">
    <property type="entry name" value="RPOLA_N"/>
    <property type="match status" value="1"/>
</dbReference>
<dbReference type="SUPFAM" id="SSF64484">
    <property type="entry name" value="beta and beta-prime subunits of DNA dependent RNA-polymerase"/>
    <property type="match status" value="1"/>
</dbReference>
<feature type="chain" id="PRO_0000067726" description="DNA-directed RNA polymerase subunit beta'">
    <location>
        <begin position="1"/>
        <end position="1393"/>
    </location>
</feature>
<feature type="binding site" evidence="1">
    <location>
        <position position="72"/>
    </location>
    <ligand>
        <name>Zn(2+)</name>
        <dbReference type="ChEBI" id="CHEBI:29105"/>
        <label>1</label>
    </ligand>
</feature>
<feature type="binding site" evidence="1">
    <location>
        <position position="74"/>
    </location>
    <ligand>
        <name>Zn(2+)</name>
        <dbReference type="ChEBI" id="CHEBI:29105"/>
        <label>1</label>
    </ligand>
</feature>
<feature type="binding site" evidence="1">
    <location>
        <position position="87"/>
    </location>
    <ligand>
        <name>Zn(2+)</name>
        <dbReference type="ChEBI" id="CHEBI:29105"/>
        <label>1</label>
    </ligand>
</feature>
<feature type="binding site" evidence="1">
    <location>
        <position position="90"/>
    </location>
    <ligand>
        <name>Zn(2+)</name>
        <dbReference type="ChEBI" id="CHEBI:29105"/>
        <label>1</label>
    </ligand>
</feature>
<feature type="binding site" evidence="1">
    <location>
        <position position="463"/>
    </location>
    <ligand>
        <name>Mg(2+)</name>
        <dbReference type="ChEBI" id="CHEBI:18420"/>
    </ligand>
</feature>
<feature type="binding site" evidence="1">
    <location>
        <position position="465"/>
    </location>
    <ligand>
        <name>Mg(2+)</name>
        <dbReference type="ChEBI" id="CHEBI:18420"/>
    </ligand>
</feature>
<feature type="binding site" evidence="1">
    <location>
        <position position="467"/>
    </location>
    <ligand>
        <name>Mg(2+)</name>
        <dbReference type="ChEBI" id="CHEBI:18420"/>
    </ligand>
</feature>
<feature type="binding site" evidence="1">
    <location>
        <position position="812"/>
    </location>
    <ligand>
        <name>Zn(2+)</name>
        <dbReference type="ChEBI" id="CHEBI:29105"/>
        <label>2</label>
    </ligand>
</feature>
<feature type="binding site" evidence="1">
    <location>
        <position position="887"/>
    </location>
    <ligand>
        <name>Zn(2+)</name>
        <dbReference type="ChEBI" id="CHEBI:29105"/>
        <label>2</label>
    </ligand>
</feature>
<feature type="binding site" evidence="1">
    <location>
        <position position="894"/>
    </location>
    <ligand>
        <name>Zn(2+)</name>
        <dbReference type="ChEBI" id="CHEBI:29105"/>
        <label>2</label>
    </ligand>
</feature>
<feature type="binding site" evidence="1">
    <location>
        <position position="897"/>
    </location>
    <ligand>
        <name>Zn(2+)</name>
        <dbReference type="ChEBI" id="CHEBI:29105"/>
        <label>2</label>
    </ligand>
</feature>
<proteinExistence type="inferred from homology"/>
<reference key="1">
    <citation type="journal article" date="2003" name="Nucleic Acids Res.">
        <title>Genome sequence of Chlamydophila caviae (Chlamydia psittaci GPIC): examining the role of niche-specific genes in the evolution of the Chlamydiaceae.</title>
        <authorList>
            <person name="Read T.D."/>
            <person name="Myers G.S.A."/>
            <person name="Brunham R.C."/>
            <person name="Nelson W.C."/>
            <person name="Paulsen I.T."/>
            <person name="Heidelberg J.F."/>
            <person name="Holtzapple E.K."/>
            <person name="Khouri H.M."/>
            <person name="Federova N.B."/>
            <person name="Carty H.A."/>
            <person name="Umayam L.A."/>
            <person name="Haft D.H."/>
            <person name="Peterson J.D."/>
            <person name="Beanan M.J."/>
            <person name="White O."/>
            <person name="Salzberg S.L."/>
            <person name="Hsia R.-C."/>
            <person name="McClarty G."/>
            <person name="Rank R.G."/>
            <person name="Bavoil P.M."/>
            <person name="Fraser C.M."/>
        </authorList>
    </citation>
    <scope>NUCLEOTIDE SEQUENCE [LARGE SCALE GENOMIC DNA]</scope>
    <source>
        <strain>ATCC VR-813 / DSM 19441 / 03DC25 / GPIC</strain>
    </source>
</reference>
<sequence length="1393" mass="155059">MFGEGSRDNATLSKEGLFDKLEIGIASDITIRDKWSCGEIKKPETINYRTFKPEKGGLFCEKIFGPTKDWECCCGKYKKIKHKGIVCDRCGVEVTLSKVRRERMAHIELAVPIVHIWFFKTTPSRIGNVLGMTASDLERIIYYEEYVVIDPGKTDLNKKQLLNDAQYREVVEKWGKDAFVAKMGGEAIYDLLKSEDLQSLLKELKDRLRKTKSQQARMKLAKRLKIIEGFVSSSNHPEWMVLKSVPVVPPDLRPLVPLDGGRFATSDLNDLYRRVINRNNRLKAILRLKTPEVIVRNEKRMLQEAVDALFDNGRHGHPVMGAGNRPLKSLSEMLKGKNGRFRQNLLGKRVDYSGRSVIIVGPELKFNQCGLPKEMALELFEPFIIKRLKDQGSVYTIRSAKKMIQRGAPEVWDVLEEIIKGHPVLLNRAPTLHRLGIQAFEPVLIEGKAIRVHPLVCAAFNADFDGDQMAVHVPLSIEAQLEAKVLMMAPDNIFLPSSGKPVATPSKDMTLGIYYLMADPTYFPEDHGGKIKIFRDVTEVLRALYTGGFLDERINNRCDETGRGIHIHEKIKVRIDGQIIETTPGRVLFNRIVPKELGFQNYSMPSKRISELILQCYKKVGLEATVRFLDDLKDLGFIQATKAAISMGLKDVRIPEIKSEILKEAYDKVAVVKKQYDDGIITDGERHSKTISIWTEVSELLSDALYVEISKQAKSKHNPLFLMIDSGARGNKSQLKQLGALRGLMAKPNGAIIESPITSNFREGLTVLEYSISSHGARKGLADTALKTADSGYLTRRLVDVAQDVIITEKDCGTLNHIEISAIRQGSEELLPLKDRIYGRTVSEDIYQPGDKSKLLAKNGDVVTSAQAELIDDAGIESIKIRSTLTCESRRGVCAKCYGLNLANGRLIGLGEAVGIIAAQSIGEPGTQLTMRTFHLGGIAATSSTPEIVTDNDGILVYMDLRVVVGQDGNHLVLNKKGAIHVVRDEGRSLEEYKKLLSTKSIESLETYPVELGVKILVGDGEKVSSGQRIAEVELHNIPIICDKPGFVKYEDLVEGISTEKVVNKNTGLVELIVKQHRGELHPQIAIYSDAGLTELVGTYAIPSGAIISVEENQKVDPGMLLARLPRGAIKTKDITGGLPRVAELVEARKPEDAADIAKIDGVVDFKGIQKNKRILVVRDEITGMEEEHLIPLTKHLIVQRGDNVMKGQQLTDGLVVPHEILEICGVRELQKYLVNEVQEVYRLQGVDINDKHIEIIVRQMLQKVRITDPGDTTLLFGEEVNKKEFYEENRRTEEDGGKPAQAVPVLLGITKASLGTESFISAASFQDTTRVLTDAACSSKTDYLLGFKENVIMGHMIPGGTGFDTHKRIKQYLEKEQEDLVFDFESESECAC</sequence>
<protein>
    <recommendedName>
        <fullName evidence="1">DNA-directed RNA polymerase subunit beta'</fullName>
        <shortName evidence="1">RNAP subunit beta'</shortName>
        <ecNumber evidence="1">2.7.7.6</ecNumber>
    </recommendedName>
    <alternativeName>
        <fullName evidence="1">RNA polymerase subunit beta'</fullName>
    </alternativeName>
    <alternativeName>
        <fullName evidence="1">Transcriptase subunit beta'</fullName>
    </alternativeName>
</protein>
<gene>
    <name evidence="1" type="primary">rpoC</name>
    <name type="ordered locus">CCA_00690</name>
</gene>
<keyword id="KW-0240">DNA-directed RNA polymerase</keyword>
<keyword id="KW-0460">Magnesium</keyword>
<keyword id="KW-0479">Metal-binding</keyword>
<keyword id="KW-0548">Nucleotidyltransferase</keyword>
<keyword id="KW-0804">Transcription</keyword>
<keyword id="KW-0808">Transferase</keyword>
<keyword id="KW-0862">Zinc</keyword>
<comment type="function">
    <text evidence="1">DNA-dependent RNA polymerase catalyzes the transcription of DNA into RNA using the four ribonucleoside triphosphates as substrates.</text>
</comment>
<comment type="catalytic activity">
    <reaction evidence="1">
        <text>RNA(n) + a ribonucleoside 5'-triphosphate = RNA(n+1) + diphosphate</text>
        <dbReference type="Rhea" id="RHEA:21248"/>
        <dbReference type="Rhea" id="RHEA-COMP:14527"/>
        <dbReference type="Rhea" id="RHEA-COMP:17342"/>
        <dbReference type="ChEBI" id="CHEBI:33019"/>
        <dbReference type="ChEBI" id="CHEBI:61557"/>
        <dbReference type="ChEBI" id="CHEBI:140395"/>
        <dbReference type="EC" id="2.7.7.6"/>
    </reaction>
</comment>
<comment type="cofactor">
    <cofactor evidence="1">
        <name>Mg(2+)</name>
        <dbReference type="ChEBI" id="CHEBI:18420"/>
    </cofactor>
    <text evidence="1">Binds 1 Mg(2+) ion per subunit.</text>
</comment>
<comment type="cofactor">
    <cofactor evidence="1">
        <name>Zn(2+)</name>
        <dbReference type="ChEBI" id="CHEBI:29105"/>
    </cofactor>
    <text evidence="1">Binds 2 Zn(2+) ions per subunit.</text>
</comment>
<comment type="subunit">
    <text evidence="1">The RNAP catalytic core consists of 2 alpha, 1 beta, 1 beta' and 1 omega subunit. When a sigma factor is associated with the core the holoenzyme is formed, which can initiate transcription.</text>
</comment>
<comment type="similarity">
    <text evidence="1">Belongs to the RNA polymerase beta' chain family.</text>
</comment>
<name>RPOC_CHLCV</name>